<name>RL25_MARMS</name>
<feature type="chain" id="PRO_1000166175" description="Large ribosomal subunit protein bL25">
    <location>
        <begin position="1"/>
        <end position="192"/>
    </location>
</feature>
<sequence length="192" mass="20580">MSLSINAVARTQEGKGASRRLRNEGLVPAVIYGGETAPVSISFKDNELLKAVGTPGFLTGLVEVTVEGKTEQVLVKALQRHPSTGAVMHMDLQRAQADKAITTRVPLSFINAAQSEGVSKQGGRLTVESKLAEVRCLPANLPEVLTVDVIKGQLDQIFHLSDVILPEGVELVSLLKGEDHDQPIARIGKSKR</sequence>
<gene>
    <name evidence="1" type="primary">rplY</name>
    <name evidence="1" type="synonym">ctc</name>
    <name type="ordered locus">Mmwyl1_3605</name>
</gene>
<proteinExistence type="inferred from homology"/>
<accession>A6W1C8</accession>
<protein>
    <recommendedName>
        <fullName evidence="1">Large ribosomal subunit protein bL25</fullName>
    </recommendedName>
    <alternativeName>
        <fullName evidence="2">50S ribosomal protein L25</fullName>
    </alternativeName>
    <alternativeName>
        <fullName evidence="1">General stress protein CTC</fullName>
    </alternativeName>
</protein>
<comment type="function">
    <text evidence="1">This is one of the proteins that binds to the 5S RNA in the ribosome where it forms part of the central protuberance.</text>
</comment>
<comment type="subunit">
    <text evidence="1">Part of the 50S ribosomal subunit; part of the 5S rRNA/L5/L18/L25 subcomplex. Contacts the 5S rRNA. Binds to the 5S rRNA independently of L5 and L18.</text>
</comment>
<comment type="similarity">
    <text evidence="1">Belongs to the bacterial ribosomal protein bL25 family. CTC subfamily.</text>
</comment>
<reference key="1">
    <citation type="submission" date="2007-06" db="EMBL/GenBank/DDBJ databases">
        <title>Complete sequence of Marinomonas sp. MWYL1.</title>
        <authorList>
            <consortium name="US DOE Joint Genome Institute"/>
            <person name="Copeland A."/>
            <person name="Lucas S."/>
            <person name="Lapidus A."/>
            <person name="Barry K."/>
            <person name="Glavina del Rio T."/>
            <person name="Dalin E."/>
            <person name="Tice H."/>
            <person name="Pitluck S."/>
            <person name="Kiss H."/>
            <person name="Brettin T."/>
            <person name="Bruce D."/>
            <person name="Detter J.C."/>
            <person name="Han C."/>
            <person name="Schmutz J."/>
            <person name="Larimer F."/>
            <person name="Land M."/>
            <person name="Hauser L."/>
            <person name="Kyrpides N."/>
            <person name="Kim E."/>
            <person name="Johnston A.W.B."/>
            <person name="Todd J.D."/>
            <person name="Rogers R."/>
            <person name="Wexler M."/>
            <person name="Bond P.L."/>
            <person name="Li Y."/>
            <person name="Richardson P."/>
        </authorList>
    </citation>
    <scope>NUCLEOTIDE SEQUENCE [LARGE SCALE GENOMIC DNA]</scope>
    <source>
        <strain>MWYL1</strain>
    </source>
</reference>
<keyword id="KW-0687">Ribonucleoprotein</keyword>
<keyword id="KW-0689">Ribosomal protein</keyword>
<keyword id="KW-0694">RNA-binding</keyword>
<keyword id="KW-0699">rRNA-binding</keyword>
<organism>
    <name type="scientific">Marinomonas sp. (strain MWYL1)</name>
    <dbReference type="NCBI Taxonomy" id="400668"/>
    <lineage>
        <taxon>Bacteria</taxon>
        <taxon>Pseudomonadati</taxon>
        <taxon>Pseudomonadota</taxon>
        <taxon>Gammaproteobacteria</taxon>
        <taxon>Oceanospirillales</taxon>
        <taxon>Oceanospirillaceae</taxon>
        <taxon>Marinomonas</taxon>
    </lineage>
</organism>
<evidence type="ECO:0000255" key="1">
    <source>
        <dbReference type="HAMAP-Rule" id="MF_01334"/>
    </source>
</evidence>
<evidence type="ECO:0000305" key="2"/>
<dbReference type="EMBL" id="CP000749">
    <property type="protein sequence ID" value="ABR72507.1"/>
    <property type="molecule type" value="Genomic_DNA"/>
</dbReference>
<dbReference type="SMR" id="A6W1C8"/>
<dbReference type="STRING" id="400668.Mmwyl1_3605"/>
<dbReference type="KEGG" id="mmw:Mmwyl1_3605"/>
<dbReference type="eggNOG" id="COG1825">
    <property type="taxonomic scope" value="Bacteria"/>
</dbReference>
<dbReference type="HOGENOM" id="CLU_075939_0_1_6"/>
<dbReference type="OrthoDB" id="9806411at2"/>
<dbReference type="GO" id="GO:0022625">
    <property type="term" value="C:cytosolic large ribosomal subunit"/>
    <property type="evidence" value="ECO:0007669"/>
    <property type="project" value="TreeGrafter"/>
</dbReference>
<dbReference type="GO" id="GO:0008097">
    <property type="term" value="F:5S rRNA binding"/>
    <property type="evidence" value="ECO:0007669"/>
    <property type="project" value="InterPro"/>
</dbReference>
<dbReference type="GO" id="GO:0003735">
    <property type="term" value="F:structural constituent of ribosome"/>
    <property type="evidence" value="ECO:0007669"/>
    <property type="project" value="InterPro"/>
</dbReference>
<dbReference type="GO" id="GO:0006412">
    <property type="term" value="P:translation"/>
    <property type="evidence" value="ECO:0007669"/>
    <property type="project" value="UniProtKB-UniRule"/>
</dbReference>
<dbReference type="CDD" id="cd00495">
    <property type="entry name" value="Ribosomal_L25_TL5_CTC"/>
    <property type="match status" value="1"/>
</dbReference>
<dbReference type="Gene3D" id="2.170.120.20">
    <property type="entry name" value="Ribosomal protein L25, beta domain"/>
    <property type="match status" value="1"/>
</dbReference>
<dbReference type="Gene3D" id="2.40.240.10">
    <property type="entry name" value="Ribosomal Protein L25, Chain P"/>
    <property type="match status" value="1"/>
</dbReference>
<dbReference type="HAMAP" id="MF_01336">
    <property type="entry name" value="Ribosomal_bL25"/>
    <property type="match status" value="1"/>
</dbReference>
<dbReference type="HAMAP" id="MF_01334">
    <property type="entry name" value="Ribosomal_bL25_CTC"/>
    <property type="match status" value="1"/>
</dbReference>
<dbReference type="InterPro" id="IPR020056">
    <property type="entry name" value="Rbsml_bL25/Gln-tRNA_synth_N"/>
</dbReference>
<dbReference type="InterPro" id="IPR011035">
    <property type="entry name" value="Ribosomal_bL25/Gln-tRNA_synth"/>
</dbReference>
<dbReference type="InterPro" id="IPR020057">
    <property type="entry name" value="Ribosomal_bL25_b-dom"/>
</dbReference>
<dbReference type="InterPro" id="IPR037121">
    <property type="entry name" value="Ribosomal_bL25_C"/>
</dbReference>
<dbReference type="InterPro" id="IPR001021">
    <property type="entry name" value="Ribosomal_bL25_long"/>
</dbReference>
<dbReference type="InterPro" id="IPR020055">
    <property type="entry name" value="Ribosomal_bL25_short"/>
</dbReference>
<dbReference type="InterPro" id="IPR029751">
    <property type="entry name" value="Ribosomal_L25_dom"/>
</dbReference>
<dbReference type="InterPro" id="IPR020930">
    <property type="entry name" value="Ribosomal_uL5_bac-type"/>
</dbReference>
<dbReference type="NCBIfam" id="TIGR00731">
    <property type="entry name" value="bL25_bact_ctc"/>
    <property type="match status" value="1"/>
</dbReference>
<dbReference type="NCBIfam" id="NF004130">
    <property type="entry name" value="PRK05618.1-5"/>
    <property type="match status" value="1"/>
</dbReference>
<dbReference type="NCBIfam" id="NF004612">
    <property type="entry name" value="PRK05943.1"/>
    <property type="match status" value="1"/>
</dbReference>
<dbReference type="PANTHER" id="PTHR33284">
    <property type="entry name" value="RIBOSOMAL PROTEIN L25/GLN-TRNA SYNTHETASE, ANTI-CODON-BINDING DOMAIN-CONTAINING PROTEIN"/>
    <property type="match status" value="1"/>
</dbReference>
<dbReference type="PANTHER" id="PTHR33284:SF1">
    <property type="entry name" value="RIBOSOMAL PROTEIN L25_GLN-TRNA SYNTHETASE, ANTI-CODON-BINDING DOMAIN-CONTAINING PROTEIN"/>
    <property type="match status" value="1"/>
</dbReference>
<dbReference type="Pfam" id="PF01386">
    <property type="entry name" value="Ribosomal_L25p"/>
    <property type="match status" value="1"/>
</dbReference>
<dbReference type="Pfam" id="PF14693">
    <property type="entry name" value="Ribosomal_TL5_C"/>
    <property type="match status" value="1"/>
</dbReference>
<dbReference type="SUPFAM" id="SSF50715">
    <property type="entry name" value="Ribosomal protein L25-like"/>
    <property type="match status" value="1"/>
</dbReference>